<sequence>MAVDTANEVKAIARYIRMSPSKVRRVLDQLRGRSYREALILLEFMPYKSCEPILKVLRSAVANAEHNQGLDPTQLVISQAYADMGPSLKRFRPRAQGRAYQIRKQTCHITIAVAPQV</sequence>
<proteinExistence type="inferred from homology"/>
<gene>
    <name evidence="1" type="primary">rplV</name>
    <name evidence="1" type="synonym">rpl22</name>
    <name type="ordered locus">syc1870_d</name>
</gene>
<name>RL22_SYNP6</name>
<reference key="1">
    <citation type="journal article" date="1997" name="Gene">
        <title>Organization of a large gene cluster encoding ribosomal proteins in the cyanobacterium Synechococcus sp. strain PCC 6301: comparison of gene clusters among cyanobacteria, eubacteria and chloroplast genomes.</title>
        <authorList>
            <person name="Sugita M."/>
            <person name="Sugishita H."/>
            <person name="Fujishiro T."/>
            <person name="Tsuboi M."/>
            <person name="Sugita C."/>
            <person name="Endo T."/>
            <person name="Sugiura M."/>
        </authorList>
    </citation>
    <scope>NUCLEOTIDE SEQUENCE [GENOMIC DNA]</scope>
</reference>
<reference key="2">
    <citation type="journal article" date="2007" name="Photosyn. Res.">
        <title>Complete nucleotide sequence of the freshwater unicellular cyanobacterium Synechococcus elongatus PCC 6301 chromosome: gene content and organization.</title>
        <authorList>
            <person name="Sugita C."/>
            <person name="Ogata K."/>
            <person name="Shikata M."/>
            <person name="Jikuya H."/>
            <person name="Takano J."/>
            <person name="Furumichi M."/>
            <person name="Kanehisa M."/>
            <person name="Omata T."/>
            <person name="Sugiura M."/>
            <person name="Sugita M."/>
        </authorList>
    </citation>
    <scope>NUCLEOTIDE SEQUENCE [LARGE SCALE GENOMIC DNA]</scope>
    <source>
        <strain>ATCC 27144 / PCC 6301 / SAUG 1402/1</strain>
    </source>
</reference>
<keyword id="KW-0687">Ribonucleoprotein</keyword>
<keyword id="KW-0689">Ribosomal protein</keyword>
<keyword id="KW-0694">RNA-binding</keyword>
<keyword id="KW-0699">rRNA-binding</keyword>
<dbReference type="EMBL" id="AB000111">
    <property type="protein sequence ID" value="BAA22454.1"/>
    <property type="molecule type" value="Genomic_DNA"/>
</dbReference>
<dbReference type="EMBL" id="AP008231">
    <property type="protein sequence ID" value="BAD80060.1"/>
    <property type="molecule type" value="Genomic_DNA"/>
</dbReference>
<dbReference type="RefSeq" id="WP_011244180.1">
    <property type="nucleotide sequence ID" value="NZ_CP085785.1"/>
</dbReference>
<dbReference type="SMR" id="O24694"/>
<dbReference type="GeneID" id="72431110"/>
<dbReference type="KEGG" id="syc:syc1870_d"/>
<dbReference type="eggNOG" id="COG0091">
    <property type="taxonomic scope" value="Bacteria"/>
</dbReference>
<dbReference type="Proteomes" id="UP000001175">
    <property type="component" value="Chromosome"/>
</dbReference>
<dbReference type="GO" id="GO:0022625">
    <property type="term" value="C:cytosolic large ribosomal subunit"/>
    <property type="evidence" value="ECO:0007669"/>
    <property type="project" value="TreeGrafter"/>
</dbReference>
<dbReference type="GO" id="GO:0019843">
    <property type="term" value="F:rRNA binding"/>
    <property type="evidence" value="ECO:0007669"/>
    <property type="project" value="UniProtKB-UniRule"/>
</dbReference>
<dbReference type="GO" id="GO:0003735">
    <property type="term" value="F:structural constituent of ribosome"/>
    <property type="evidence" value="ECO:0007669"/>
    <property type="project" value="InterPro"/>
</dbReference>
<dbReference type="GO" id="GO:0006412">
    <property type="term" value="P:translation"/>
    <property type="evidence" value="ECO:0007669"/>
    <property type="project" value="UniProtKB-UniRule"/>
</dbReference>
<dbReference type="CDD" id="cd00336">
    <property type="entry name" value="Ribosomal_L22"/>
    <property type="match status" value="1"/>
</dbReference>
<dbReference type="FunFam" id="3.90.470.10:FF:000004">
    <property type="entry name" value="50S ribosomal protein L22, chloroplastic"/>
    <property type="match status" value="1"/>
</dbReference>
<dbReference type="Gene3D" id="3.90.470.10">
    <property type="entry name" value="Ribosomal protein L22/L17"/>
    <property type="match status" value="1"/>
</dbReference>
<dbReference type="HAMAP" id="MF_01331_B">
    <property type="entry name" value="Ribosomal_uL22_B"/>
    <property type="match status" value="1"/>
</dbReference>
<dbReference type="InterPro" id="IPR001063">
    <property type="entry name" value="Ribosomal_uL22"/>
</dbReference>
<dbReference type="InterPro" id="IPR005727">
    <property type="entry name" value="Ribosomal_uL22_bac/chlpt-type"/>
</dbReference>
<dbReference type="InterPro" id="IPR047867">
    <property type="entry name" value="Ribosomal_uL22_bac/org-type"/>
</dbReference>
<dbReference type="InterPro" id="IPR018260">
    <property type="entry name" value="Ribosomal_uL22_CS"/>
</dbReference>
<dbReference type="InterPro" id="IPR036394">
    <property type="entry name" value="Ribosomal_uL22_sf"/>
</dbReference>
<dbReference type="NCBIfam" id="TIGR01044">
    <property type="entry name" value="rplV_bact"/>
    <property type="match status" value="1"/>
</dbReference>
<dbReference type="PANTHER" id="PTHR13501">
    <property type="entry name" value="CHLOROPLAST 50S RIBOSOMAL PROTEIN L22-RELATED"/>
    <property type="match status" value="1"/>
</dbReference>
<dbReference type="PANTHER" id="PTHR13501:SF8">
    <property type="entry name" value="LARGE RIBOSOMAL SUBUNIT PROTEIN UL22M"/>
    <property type="match status" value="1"/>
</dbReference>
<dbReference type="Pfam" id="PF00237">
    <property type="entry name" value="Ribosomal_L22"/>
    <property type="match status" value="1"/>
</dbReference>
<dbReference type="SUPFAM" id="SSF54843">
    <property type="entry name" value="Ribosomal protein L22"/>
    <property type="match status" value="1"/>
</dbReference>
<dbReference type="PROSITE" id="PS00464">
    <property type="entry name" value="RIBOSOMAL_L22"/>
    <property type="match status" value="1"/>
</dbReference>
<comment type="function">
    <text evidence="1">This protein binds specifically to 23S rRNA; its binding is stimulated by other ribosomal proteins, e.g. L4, L17, and L20. It is important during the early stages of 50S assembly. It makes multiple contacts with different domains of the 23S rRNA in the assembled 50S subunit and ribosome (By similarity).</text>
</comment>
<comment type="function">
    <text evidence="1">The globular domain of the protein is located near the polypeptide exit tunnel on the outside of the subunit, while an extended beta-hairpin is found that lines the wall of the exit tunnel in the center of the 70S ribosome.</text>
</comment>
<comment type="subunit">
    <text evidence="1">Part of the 50S ribosomal subunit.</text>
</comment>
<comment type="similarity">
    <text evidence="1">Belongs to the universal ribosomal protein uL22 family.</text>
</comment>
<evidence type="ECO:0000255" key="1">
    <source>
        <dbReference type="HAMAP-Rule" id="MF_01331"/>
    </source>
</evidence>
<evidence type="ECO:0000305" key="2"/>
<feature type="chain" id="PRO_0000125244" description="Large ribosomal subunit protein uL22">
    <location>
        <begin position="1"/>
        <end position="117"/>
    </location>
</feature>
<accession>O24694</accession>
<protein>
    <recommendedName>
        <fullName evidence="1">Large ribosomal subunit protein uL22</fullName>
    </recommendedName>
    <alternativeName>
        <fullName evidence="2">50S ribosomal protein L22</fullName>
    </alternativeName>
</protein>
<organism>
    <name type="scientific">Synechococcus sp. (strain ATCC 27144 / PCC 6301 / SAUG 1402/1)</name>
    <name type="common">Anacystis nidulans</name>
    <dbReference type="NCBI Taxonomy" id="269084"/>
    <lineage>
        <taxon>Bacteria</taxon>
        <taxon>Bacillati</taxon>
        <taxon>Cyanobacteriota</taxon>
        <taxon>Cyanophyceae</taxon>
        <taxon>Synechococcales</taxon>
        <taxon>Synechococcaceae</taxon>
        <taxon>Synechococcus</taxon>
    </lineage>
</organism>